<evidence type="ECO:0000250" key="1">
    <source>
        <dbReference type="UniProtKB" id="P0DP78"/>
    </source>
</evidence>
<evidence type="ECO:0000250" key="2">
    <source>
        <dbReference type="UniProtKB" id="Q9HCG8"/>
    </source>
</evidence>
<evidence type="ECO:0000255" key="3">
    <source>
        <dbReference type="PROSITE-ProRule" id="PRU00698"/>
    </source>
</evidence>
<evidence type="ECO:0000256" key="4">
    <source>
        <dbReference type="SAM" id="MobiDB-lite"/>
    </source>
</evidence>
<evidence type="ECO:0000269" key="5">
    <source>
    </source>
</evidence>
<evidence type="ECO:0000303" key="6">
    <source>
    </source>
</evidence>
<evidence type="ECO:0000305" key="7"/>
<gene>
    <name evidence="6" type="primary">Mdmd</name>
</gene>
<feature type="chain" id="PRO_0000441323" description="Male determiner protein Mdmd(V)">
    <location>
        <begin position="1"/>
        <end position="1174"/>
    </location>
</feature>
<feature type="domain" description="MIF4G" evidence="3">
    <location>
        <begin position="348"/>
        <end position="531"/>
    </location>
</feature>
<feature type="domain" description="MI" evidence="3">
    <location>
        <begin position="641"/>
        <end position="757"/>
    </location>
</feature>
<feature type="region of interest" description="Disordered" evidence="4">
    <location>
        <begin position="1"/>
        <end position="51"/>
    </location>
</feature>
<feature type="region of interest" description="Disordered" evidence="4">
    <location>
        <begin position="79"/>
        <end position="110"/>
    </location>
</feature>
<feature type="region of interest" description="Disordered" evidence="4">
    <location>
        <begin position="136"/>
        <end position="259"/>
    </location>
</feature>
<feature type="region of interest" description="Disordered" evidence="4">
    <location>
        <begin position="597"/>
        <end position="616"/>
    </location>
</feature>
<feature type="region of interest" description="Disordered" evidence="4">
    <location>
        <begin position="840"/>
        <end position="1045"/>
    </location>
</feature>
<feature type="region of interest" description="Disordered" evidence="4">
    <location>
        <begin position="1095"/>
        <end position="1133"/>
    </location>
</feature>
<feature type="compositionally biased region" description="Basic and acidic residues" evidence="4">
    <location>
        <begin position="1"/>
        <end position="15"/>
    </location>
</feature>
<feature type="compositionally biased region" description="Low complexity" evidence="4">
    <location>
        <begin position="16"/>
        <end position="35"/>
    </location>
</feature>
<feature type="compositionally biased region" description="Polar residues" evidence="4">
    <location>
        <begin position="36"/>
        <end position="47"/>
    </location>
</feature>
<feature type="compositionally biased region" description="Basic and acidic residues" evidence="4">
    <location>
        <begin position="79"/>
        <end position="92"/>
    </location>
</feature>
<feature type="compositionally biased region" description="Polar residues" evidence="4">
    <location>
        <begin position="93"/>
        <end position="102"/>
    </location>
</feature>
<feature type="compositionally biased region" description="Low complexity" evidence="4">
    <location>
        <begin position="138"/>
        <end position="153"/>
    </location>
</feature>
<feature type="compositionally biased region" description="Basic residues" evidence="4">
    <location>
        <begin position="167"/>
        <end position="180"/>
    </location>
</feature>
<feature type="compositionally biased region" description="Basic and acidic residues" evidence="4">
    <location>
        <begin position="183"/>
        <end position="200"/>
    </location>
</feature>
<feature type="compositionally biased region" description="Basic residues" evidence="4">
    <location>
        <begin position="201"/>
        <end position="223"/>
    </location>
</feature>
<feature type="compositionally biased region" description="Basic and acidic residues" evidence="4">
    <location>
        <begin position="235"/>
        <end position="259"/>
    </location>
</feature>
<feature type="compositionally biased region" description="Low complexity" evidence="4">
    <location>
        <begin position="597"/>
        <end position="608"/>
    </location>
</feature>
<feature type="compositionally biased region" description="Low complexity" evidence="4">
    <location>
        <begin position="840"/>
        <end position="857"/>
    </location>
</feature>
<feature type="compositionally biased region" description="Basic residues" evidence="4">
    <location>
        <begin position="869"/>
        <end position="909"/>
    </location>
</feature>
<feature type="compositionally biased region" description="Basic and acidic residues" evidence="4">
    <location>
        <begin position="910"/>
        <end position="924"/>
    </location>
</feature>
<feature type="compositionally biased region" description="Low complexity" evidence="4">
    <location>
        <begin position="926"/>
        <end position="957"/>
    </location>
</feature>
<feature type="compositionally biased region" description="Basic residues" evidence="4">
    <location>
        <begin position="963"/>
        <end position="1001"/>
    </location>
</feature>
<feature type="compositionally biased region" description="Low complexity" evidence="4">
    <location>
        <begin position="1010"/>
        <end position="1020"/>
    </location>
</feature>
<feature type="compositionally biased region" description="Basic residues" evidence="4">
    <location>
        <begin position="1034"/>
        <end position="1045"/>
    </location>
</feature>
<feature type="compositionally biased region" description="Basic and acidic residues" evidence="4">
    <location>
        <begin position="1095"/>
        <end position="1118"/>
    </location>
</feature>
<feature type="compositionally biased region" description="Basic residues" evidence="4">
    <location>
        <begin position="1119"/>
        <end position="1130"/>
    </location>
</feature>
<dbReference type="EMBL" id="KY020050">
    <property type="protein sequence ID" value="ART29448.1"/>
    <property type="molecule type" value="Genomic_DNA"/>
</dbReference>
<dbReference type="SMR" id="P0DP81"/>
<dbReference type="STRING" id="7370.P0DP81"/>
<dbReference type="VEuPathDB" id="VectorBase:MDOA000598"/>
<dbReference type="VEuPathDB" id="VectorBase:MDOMA2_013059"/>
<dbReference type="Proteomes" id="UP000694905">
    <property type="component" value="Unplaced"/>
</dbReference>
<dbReference type="GO" id="GO:0071013">
    <property type="term" value="C:catalytic step 2 spliceosome"/>
    <property type="evidence" value="ECO:0007669"/>
    <property type="project" value="TreeGrafter"/>
</dbReference>
<dbReference type="GO" id="GO:0016607">
    <property type="term" value="C:nuclear speck"/>
    <property type="evidence" value="ECO:0007669"/>
    <property type="project" value="UniProtKB-SubCell"/>
</dbReference>
<dbReference type="GO" id="GO:0003723">
    <property type="term" value="F:RNA binding"/>
    <property type="evidence" value="ECO:0007669"/>
    <property type="project" value="InterPro"/>
</dbReference>
<dbReference type="GO" id="GO:0030154">
    <property type="term" value="P:cell differentiation"/>
    <property type="evidence" value="ECO:0007669"/>
    <property type="project" value="UniProtKB-KW"/>
</dbReference>
<dbReference type="GO" id="GO:0030238">
    <property type="term" value="P:male sex determination"/>
    <property type="evidence" value="ECO:0000250"/>
    <property type="project" value="UniProtKB"/>
</dbReference>
<dbReference type="GO" id="GO:0046661">
    <property type="term" value="P:male sex differentiation"/>
    <property type="evidence" value="ECO:0000250"/>
    <property type="project" value="UniProtKB"/>
</dbReference>
<dbReference type="GO" id="GO:0000398">
    <property type="term" value="P:mRNA splicing, via spliceosome"/>
    <property type="evidence" value="ECO:0007669"/>
    <property type="project" value="TreeGrafter"/>
</dbReference>
<dbReference type="GO" id="GO:0048024">
    <property type="term" value="P:regulation of mRNA splicing, via spliceosome"/>
    <property type="evidence" value="ECO:0000250"/>
    <property type="project" value="UniProtKB"/>
</dbReference>
<dbReference type="FunFam" id="1.25.40.180:FF:000004">
    <property type="entry name" value="pre-mRNA-splicing factor CWC22 homolog"/>
    <property type="match status" value="1"/>
</dbReference>
<dbReference type="Gene3D" id="1.25.40.180">
    <property type="match status" value="1"/>
</dbReference>
<dbReference type="InterPro" id="IPR016024">
    <property type="entry name" value="ARM-type_fold"/>
</dbReference>
<dbReference type="InterPro" id="IPR050781">
    <property type="entry name" value="CWC22_splicing_factor"/>
</dbReference>
<dbReference type="InterPro" id="IPR003891">
    <property type="entry name" value="Initiation_fac_eIF4g_MI"/>
</dbReference>
<dbReference type="InterPro" id="IPR003890">
    <property type="entry name" value="MIF4G-like_typ-3"/>
</dbReference>
<dbReference type="PANTHER" id="PTHR18034">
    <property type="entry name" value="CELL CYCLE CONTROL PROTEIN CWF22-RELATED"/>
    <property type="match status" value="1"/>
</dbReference>
<dbReference type="PANTHER" id="PTHR18034:SF3">
    <property type="entry name" value="PRE-MRNA-SPLICING FACTOR CWC22 HOMOLOG"/>
    <property type="match status" value="1"/>
</dbReference>
<dbReference type="Pfam" id="PF02847">
    <property type="entry name" value="MA3"/>
    <property type="match status" value="1"/>
</dbReference>
<dbReference type="SMART" id="SM00544">
    <property type="entry name" value="MA3"/>
    <property type="match status" value="1"/>
</dbReference>
<dbReference type="SMART" id="SM00543">
    <property type="entry name" value="MIF4G"/>
    <property type="match status" value="1"/>
</dbReference>
<dbReference type="SUPFAM" id="SSF48371">
    <property type="entry name" value="ARM repeat"/>
    <property type="match status" value="1"/>
</dbReference>
<dbReference type="PROSITE" id="PS51366">
    <property type="entry name" value="MI"/>
    <property type="match status" value="1"/>
</dbReference>
<proteinExistence type="evidence at transcript level"/>
<name>MDMV_MUSDO</name>
<keyword id="KW-0221">Differentiation</keyword>
<keyword id="KW-0507">mRNA processing</keyword>
<keyword id="KW-0508">mRNA splicing</keyword>
<keyword id="KW-0539">Nucleus</keyword>
<keyword id="KW-1185">Reference proteome</keyword>
<keyword id="KW-0726">Sexual differentiation</keyword>
<organism>
    <name type="scientific">Musca domestica</name>
    <name type="common">House fly</name>
    <dbReference type="NCBI Taxonomy" id="7370"/>
    <lineage>
        <taxon>Eukaryota</taxon>
        <taxon>Metazoa</taxon>
        <taxon>Ecdysozoa</taxon>
        <taxon>Arthropoda</taxon>
        <taxon>Hexapoda</taxon>
        <taxon>Insecta</taxon>
        <taxon>Pterygota</taxon>
        <taxon>Neoptera</taxon>
        <taxon>Endopterygota</taxon>
        <taxon>Diptera</taxon>
        <taxon>Brachycera</taxon>
        <taxon>Muscomorpha</taxon>
        <taxon>Muscoidea</taxon>
        <taxon>Muscidae</taxon>
        <taxon>Musca</taxon>
    </lineage>
</organism>
<comment type="function">
    <text evidence="1 2">Male determiner protein (M-factor) that controls male somatic sexual differentiation. Acts as a dominant factor that regulates the mRNA splicing of transformer (tra) and doublesex (dsx) transcripts and promotes expression of male splice forms of tra and dsx (By similarity). Probably acts as a component of the spliceosome C complex required for mRNA splicing factor and exon-junction complex (EJC) assembly (By similarity). Hinders eIF4AIII from non-specifically binding RNA and escorts it to the splicing machinery to promote EJC assembly on mature mRNAs (By similarity).</text>
</comment>
<comment type="subunit">
    <text evidence="2">Component of the spliceosome C complex.</text>
</comment>
<comment type="subcellular location">
    <subcellularLocation>
        <location evidence="2">Nucleus speckle</location>
    </subcellularLocation>
</comment>
<comment type="developmental stage">
    <text evidence="5">Specifically expressed in early male embryos. Zygotic expression first appears in 2- to 3-hour-old embryos (cellularized blastoderm stage). Expression is then maintained throughout male development until adulthood.</text>
</comment>
<comment type="miscellaneous">
    <text evidence="5">The M.domestica genome only codes for one male determiner Mdmd protein, which is encoded in the M region, and can be located at different loci on the genome (chromosomes II, III, V or Y). The M region contains a cluster of tandemly repeated Mdmd copies with only one intact copy: other copies are degenerate with large truncations and frameshifts and are assumed to be non-functional. The presence of multiple copies in the M region may preserve its integrity in a hostile non-recombining environment. This protein is encoded on chromosome V.</text>
</comment>
<comment type="similarity">
    <text evidence="7">Belongs to the CWC22 family.</text>
</comment>
<sequence length="1174" mass="134993">MNATDAESRKPENKPSSESSSSGSTSGSSDGEVSSKTYFKNNKSKVLSGQREVVLEVVRDLSYTICKEAEEKLVERFPRKDGSNEMLPKEDSINTNHNYTTDSNEHPVELTTKTEECKNTEKTKKKSFVRALSKDKQLSAYRSRSRSTRLSYSGHISRTHSVEKSLSRYKKSVLRSRRTSFGHGRDSSTTKRSVSRDKDNRLRRRIGSSRSHTRSHSRFRRSEKKLPSRSPRRIRSQERRHERRRSMSSDYERIALRRSEPIKRRDKDEFFKNNKKVSGDIKKGKGNDNGTVAELEAKITERQRKSLDILTSRTGGACLTPDKLRMIQAEITDKSSAAYQSIAREALKKYIHGYINKVNVDSVAVITRKLLKDNIVRGRGVLCHSIIQAQATSPTFTHVYAAMVAIINSKFPNIGELLLKRLVIQFKRAFGCNDKTVCLTSSHFIAHLVNQRVAHEILALEILTLLIESPTDDNVEVAITFLKECGMKLTEVSSDRVGGIFELLKNILHQGKLDKRVQYMIKVLFQVRRDGFKDHQSIIESLELVEEYAQFTHLLLLEDVTYPKDILNEFKFDDQYETNEEKYKALSKNILGSHASDSDGSFGSGSNSETALSDCDKGKNEVNDKYTSGDIIDETKPNLIALRRTIYLTLNSCLDYEECAQKLMKMQLKTCQQNEFCQILLDCCAEQRTYEKFYGLLTHRICKMNKSFIEPFKEIFKDICQTTHCLDTNRLRNISKFFAHLLFTDAISWDVLDCIKLTEDEAITSRCIFIKSFFQELVEYMGLYHFNKKLKTEVLAGTLAGLFPKDNPRNIRFSINFFTSIGLGGITNELCQLLKIAPKSAPSSSSSSSLSSELSAPSDDDSSSDSENKKKHKGKNKKMTKKKNPSKKKEKTKKIVGKNKIAAKNKTIKRRTDKDNSSSKDNFLKSESSSNESISLDSLSSELFAPSSYSSSESSNDSESKEKHKGKNKKMTKKKNPSNKREKTKKKLSKNKKAPNKNTKKRMTEKDISSSESSISESKSLNCSASNQNENEKRKKRVTSKSRTKRVKMFKQCQWVDADNQRDIKRKKRAEYRYEPLVYRKRNEECLKKGAPNCRKDNYGNRQNHEISQRHDSEIKRRREERKKRHHEKNHSREYKRSKLGLCQREYFLYMCCQFYYPCTFQCLCQNCHFTFYS</sequence>
<reference key="1">
    <citation type="journal article" date="2017" name="Science">
        <title>Male sex in houseflies is determined by Mdmd, a paralog of the generic splice factor gene CWC22.</title>
        <authorList>
            <person name="Sharma A."/>
            <person name="Heinze S.D."/>
            <person name="Wu Y."/>
            <person name="Kohlbrenner T."/>
            <person name="Morilla I."/>
            <person name="Brunner C."/>
            <person name="Wimmer E.A."/>
            <person name="van de Zande L."/>
            <person name="Robinson M.D."/>
            <person name="Beukeboom L.W."/>
            <person name="Bopp D."/>
        </authorList>
    </citation>
    <scope>NUCLEOTIDE SEQUENCE [GENOMIC DNA]</scope>
    <scope>DEVELOPMENTAL STAGE</scope>
</reference>
<accession>P0DP81</accession>
<accession>A0A1Y0AWT4</accession>
<protein>
    <recommendedName>
        <fullName evidence="6">Male determiner protein Mdmd(V)</fullName>
    </recommendedName>
    <alternativeName>
        <fullName evidence="7">Male determiner encoded on chromosome V</fullName>
    </alternativeName>
</protein>